<proteinExistence type="evidence at protein level"/>
<keyword id="KW-0903">Direct protein sequencing</keyword>
<keyword id="KW-0281">Fimbrium</keyword>
<keyword id="KW-0732">Signal</keyword>
<evidence type="ECO:0000269" key="1">
    <source>
    </source>
</evidence>
<evidence type="ECO:0000269" key="2">
    <source>
    </source>
</evidence>
<evidence type="ECO:0000305" key="3"/>
<accession>P0A1E7</accession>
<accession>P55225</accession>
<sequence length="151" mass="15305">MKLLKVAAFAAIVVSGSALAGVVPQWGGGGNHNGGGNSSGPDSTLSIYQYGSANAALALQSDARKSETTITQSGYGNGADVGQGADNSTIELTQNGFRNNATIDQWNAKNSDITVGQYGGNNAALVNQTASDSSVMVRQVGFGNNATANQY</sequence>
<protein>
    <recommendedName>
        <fullName>Major curlin subunit</fullName>
    </recommendedName>
    <alternativeName>
        <fullName>Fimbrin SEF17</fullName>
    </alternativeName>
</protein>
<feature type="signal peptide" evidence="1">
    <location>
        <begin position="1"/>
        <end position="20"/>
    </location>
</feature>
<feature type="chain" id="PRO_0000006371" description="Major curlin subunit">
    <location>
        <begin position="21"/>
        <end position="151"/>
    </location>
</feature>
<feature type="sequence conflict" description="In Ref. 2." evidence="3" ref="2">
    <original>SVMVRQVGFGNNATANQY</original>
    <variation>DSYTQVAS</variation>
    <location>
        <begin position="134"/>
        <end position="151"/>
    </location>
</feature>
<organism>
    <name type="scientific">Salmonella enteritidis</name>
    <dbReference type="NCBI Taxonomy" id="149539"/>
    <lineage>
        <taxon>Bacteria</taxon>
        <taxon>Pseudomonadati</taxon>
        <taxon>Pseudomonadota</taxon>
        <taxon>Gammaproteobacteria</taxon>
        <taxon>Enterobacterales</taxon>
        <taxon>Enterobacteriaceae</taxon>
        <taxon>Salmonella</taxon>
    </lineage>
</organism>
<reference key="1">
    <citation type="journal article" date="1996" name="J. Bacteriol.">
        <title>Salmonella enteritidis agfBAC operon encoding thin, aggregative fimbriae.</title>
        <authorList>
            <person name="Collinson S.K."/>
            <person name="Clouthier S.C."/>
            <person name="Doran J.L."/>
            <person name="Banser P.A."/>
            <person name="Kay W.W."/>
        </authorList>
    </citation>
    <scope>NUCLEOTIDE SEQUENCE [GENOMIC DNA]</scope>
    <source>
        <strain>27655-3B</strain>
    </source>
</reference>
<reference key="2">
    <citation type="journal article" date="1993" name="J. Clin. Microbiol.">
        <title>DNA-based diagnostic tests for Salmonella species targeting agfA, the structural gene for thin, aggregative fimbriae.</title>
        <authorList>
            <person name="Doran J.L."/>
            <person name="Collinson S.K."/>
            <person name="Burian J."/>
            <person name="Sarlos G."/>
            <person name="Todd E.C.D."/>
            <person name="Munro C.K."/>
            <person name="Kay C.M."/>
            <person name="Banser P.A."/>
            <person name="Peterkin P.I."/>
            <person name="Kay W.W."/>
        </authorList>
    </citation>
    <scope>NUCLEOTIDE SEQUENCE [GENOMIC DNA] OF 21-151</scope>
    <source>
        <strain>27655-3B</strain>
    </source>
</reference>
<reference key="3">
    <citation type="journal article" date="1991" name="J. Bacteriol.">
        <title>Purification and characterization of thin, aggregative fimbriae from Salmonella enteritidis.</title>
        <authorList>
            <person name="Collinson S.K."/>
            <person name="Emoedy L."/>
            <person name="Mueller K.-H."/>
            <person name="Trust T.J."/>
            <person name="Kay W.W."/>
        </authorList>
    </citation>
    <scope>PROTEIN SEQUENCE OF 21-33</scope>
    <source>
        <strain>27655-3B</strain>
    </source>
</reference>
<reference key="4">
    <citation type="journal article" date="2007" name="Microbiology">
        <title>AgfC and AgfE facilitate extracellular thin aggregative fimbriae synthesis in Salmonella enteritidis.</title>
        <authorList>
            <person name="Gibson D.L."/>
            <person name="White A.P."/>
            <person name="Rajotte C.M."/>
            <person name="Kay W.W."/>
        </authorList>
    </citation>
    <scope>SUBCELLULAR LOCATION</scope>
    <scope>INDUCTION</scope>
    <scope>OPERON STRUCTURE</scope>
    <source>
        <strain>27655-3B</strain>
    </source>
</reference>
<name>CSGA_SALEN</name>
<dbReference type="EMBL" id="U43280">
    <property type="protein sequence ID" value="AAC43599.1"/>
    <property type="molecule type" value="Genomic_DNA"/>
</dbReference>
<dbReference type="PIR" id="JC6039">
    <property type="entry name" value="JC6039"/>
</dbReference>
<dbReference type="RefSeq" id="WP_000771416.1">
    <property type="nucleotide sequence ID" value="NZ_WIDC01000007.1"/>
</dbReference>
<dbReference type="SMR" id="P0A1E7"/>
<dbReference type="GeneID" id="66755549"/>
<dbReference type="PATRIC" id="fig|149539.316.peg.2052"/>
<dbReference type="OMA" id="MKLWKIV"/>
<dbReference type="GO" id="GO:0009289">
    <property type="term" value="C:pilus"/>
    <property type="evidence" value="ECO:0000314"/>
    <property type="project" value="UniProtKB"/>
</dbReference>
<dbReference type="GO" id="GO:0007155">
    <property type="term" value="P:cell adhesion"/>
    <property type="evidence" value="ECO:0007669"/>
    <property type="project" value="InterPro"/>
</dbReference>
<dbReference type="InterPro" id="IPR009742">
    <property type="entry name" value="Curlin_rpt"/>
</dbReference>
<dbReference type="NCBIfam" id="NF007470">
    <property type="entry name" value="PRK10051.1"/>
    <property type="match status" value="1"/>
</dbReference>
<dbReference type="Pfam" id="PF07012">
    <property type="entry name" value="Curlin_rpt"/>
    <property type="match status" value="4"/>
</dbReference>
<gene>
    <name type="primary">csgA</name>
    <name type="synonym">agfA</name>
</gene>
<comment type="function">
    <text>Curlin is the structural subunit of the curli. Curli are coiled surface structures that assemble preferentially at growth temperatures below 37 degrees Celsius. Curli can bind to fibronectin.</text>
</comment>
<comment type="subcellular location">
    <subcellularLocation>
        <location evidence="2">Fimbrium</location>
    </subcellularLocation>
    <text>Part of the curli surface structure.</text>
</comment>
<comment type="induction">
    <text evidence="2">Constitutively expressed in agar-grown cells (at protein level), part of the csgBAC (agfBAC) operon.</text>
</comment>
<comment type="similarity">
    <text evidence="3">Belongs to the CsgA/CsgB family.</text>
</comment>